<accession>Q49894</accession>
<accession>O05673</accession>
<accession>Q49893</accession>
<organism>
    <name type="scientific">Mycobacterium leprae (strain TN)</name>
    <dbReference type="NCBI Taxonomy" id="272631"/>
    <lineage>
        <taxon>Bacteria</taxon>
        <taxon>Bacillati</taxon>
        <taxon>Actinomycetota</taxon>
        <taxon>Actinomycetes</taxon>
        <taxon>Mycobacteriales</taxon>
        <taxon>Mycobacteriaceae</taxon>
        <taxon>Mycobacterium</taxon>
    </lineage>
</organism>
<gene>
    <name type="primary">mctB</name>
    <name type="ordered locus">ML1362</name>
    <name type="ORF">MLC1351.10c</name>
    <name type="ORF">u0247f</name>
</gene>
<reference key="1">
    <citation type="submission" date="1994-03" db="EMBL/GenBank/DDBJ databases">
        <authorList>
            <person name="Smith D.R."/>
            <person name="Robison K."/>
        </authorList>
    </citation>
    <scope>NUCLEOTIDE SEQUENCE [GENOMIC DNA]</scope>
</reference>
<reference key="2">
    <citation type="journal article" date="2001" name="Nature">
        <title>Massive gene decay in the leprosy bacillus.</title>
        <authorList>
            <person name="Cole S.T."/>
            <person name="Eiglmeier K."/>
            <person name="Parkhill J."/>
            <person name="James K.D."/>
            <person name="Thomson N.R."/>
            <person name="Wheeler P.R."/>
            <person name="Honore N."/>
            <person name="Garnier T."/>
            <person name="Churcher C.M."/>
            <person name="Harris D.E."/>
            <person name="Mungall K.L."/>
            <person name="Basham D."/>
            <person name="Brown D."/>
            <person name="Chillingworth T."/>
            <person name="Connor R."/>
            <person name="Davies R.M."/>
            <person name="Devlin K."/>
            <person name="Duthoy S."/>
            <person name="Feltwell T."/>
            <person name="Fraser A."/>
            <person name="Hamlin N."/>
            <person name="Holroyd S."/>
            <person name="Hornsby T."/>
            <person name="Jagels K."/>
            <person name="Lacroix C."/>
            <person name="Maclean J."/>
            <person name="Moule S."/>
            <person name="Murphy L.D."/>
            <person name="Oliver K."/>
            <person name="Quail M.A."/>
            <person name="Rajandream M.A."/>
            <person name="Rutherford K.M."/>
            <person name="Rutter S."/>
            <person name="Seeger K."/>
            <person name="Simon S."/>
            <person name="Simmonds M."/>
            <person name="Skelton J."/>
            <person name="Squares R."/>
            <person name="Squares S."/>
            <person name="Stevens K."/>
            <person name="Taylor K."/>
            <person name="Whitehead S."/>
            <person name="Woodward J.R."/>
            <person name="Barrell B.G."/>
        </authorList>
    </citation>
    <scope>NUCLEOTIDE SEQUENCE [LARGE SCALE GENOMIC DNA]</scope>
    <source>
        <strain>TN</strain>
    </source>
</reference>
<dbReference type="EMBL" id="U00021">
    <property type="protein sequence ID" value="AAA50908.1"/>
    <property type="status" value="ALT_FRAME"/>
    <property type="molecule type" value="Genomic_DNA"/>
</dbReference>
<dbReference type="EMBL" id="U00021">
    <property type="protein sequence ID" value="AAA50924.1"/>
    <property type="status" value="ALT_FRAME"/>
    <property type="molecule type" value="Genomic_DNA"/>
</dbReference>
<dbReference type="EMBL" id="Z95117">
    <property type="protein sequence ID" value="CAB08274.1"/>
    <property type="molecule type" value="Genomic_DNA"/>
</dbReference>
<dbReference type="EMBL" id="AL583921">
    <property type="protein sequence ID" value="CAC31743.1"/>
    <property type="molecule type" value="Genomic_DNA"/>
</dbReference>
<dbReference type="PIR" id="D87079">
    <property type="entry name" value="D87079"/>
</dbReference>
<dbReference type="PIR" id="S72963">
    <property type="entry name" value="S72963"/>
</dbReference>
<dbReference type="PIR" id="S72964">
    <property type="entry name" value="S72964"/>
</dbReference>
<dbReference type="RefSeq" id="NP_301972.1">
    <property type="nucleotide sequence ID" value="NC_002677.1"/>
</dbReference>
<dbReference type="RefSeq" id="WP_010908293.1">
    <property type="nucleotide sequence ID" value="NC_002677.1"/>
</dbReference>
<dbReference type="SMR" id="Q49894"/>
<dbReference type="STRING" id="272631.gene:17575200"/>
<dbReference type="KEGG" id="mle:ML1362"/>
<dbReference type="PATRIC" id="fig|272631.5.peg.2519"/>
<dbReference type="Leproma" id="ML1362"/>
<dbReference type="eggNOG" id="ENOG5032TBA">
    <property type="taxonomic scope" value="Bacteria"/>
</dbReference>
<dbReference type="HOGENOM" id="CLU_072020_0_1_11"/>
<dbReference type="OrthoDB" id="4350157at2"/>
<dbReference type="Proteomes" id="UP000000806">
    <property type="component" value="Chromosome"/>
</dbReference>
<dbReference type="GO" id="GO:0009279">
    <property type="term" value="C:cell outer membrane"/>
    <property type="evidence" value="ECO:0007669"/>
    <property type="project" value="UniProtKB-SubCell"/>
</dbReference>
<dbReference type="GO" id="GO:0046930">
    <property type="term" value="C:pore complex"/>
    <property type="evidence" value="ECO:0007669"/>
    <property type="project" value="UniProtKB-KW"/>
</dbReference>
<dbReference type="GO" id="GO:0015288">
    <property type="term" value="F:porin activity"/>
    <property type="evidence" value="ECO:0007669"/>
    <property type="project" value="UniProtKB-KW"/>
</dbReference>
<dbReference type="GO" id="GO:0055070">
    <property type="term" value="P:copper ion homeostasis"/>
    <property type="evidence" value="ECO:0007669"/>
    <property type="project" value="InterPro"/>
</dbReference>
<dbReference type="GO" id="GO:0006811">
    <property type="term" value="P:monoatomic ion transport"/>
    <property type="evidence" value="ECO:0007669"/>
    <property type="project" value="UniProtKB-KW"/>
</dbReference>
<dbReference type="InterPro" id="IPR021522">
    <property type="entry name" value="MctB"/>
</dbReference>
<dbReference type="Pfam" id="PF11382">
    <property type="entry name" value="MctB"/>
    <property type="match status" value="1"/>
</dbReference>
<keyword id="KW-0998">Cell outer membrane</keyword>
<keyword id="KW-0186">Copper</keyword>
<keyword id="KW-0406">Ion transport</keyword>
<keyword id="KW-0472">Membrane</keyword>
<keyword id="KW-0626">Porin</keyword>
<keyword id="KW-1185">Reference proteome</keyword>
<keyword id="KW-0732">Signal</keyword>
<keyword id="KW-0812">Transmembrane</keyword>
<keyword id="KW-0813">Transport</keyword>
<protein>
    <recommendedName>
        <fullName>Copper transporter MctB</fullName>
    </recommendedName>
</protein>
<proteinExistence type="inferred from homology"/>
<comment type="function">
    <text evidence="1">Pore-forming protein, which is involved in efflux of copper across the outer membrane. Essential for copper resistance and maintenance of a low intracellular copper concentration (By similarity).</text>
</comment>
<comment type="subcellular location">
    <subcellularLocation>
        <location evidence="1">Cell outer membrane</location>
    </subcellularLocation>
</comment>
<comment type="similarity">
    <text evidence="3">Belongs to the MctB (TC 1.B.50) family.</text>
</comment>
<comment type="sequence caution" evidence="3">
    <conflict type="frameshift">
        <sequence resource="EMBL-CDS" id="AAA50924"/>
    </conflict>
</comment>
<evidence type="ECO:0000250" key="1"/>
<evidence type="ECO:0000255" key="2"/>
<evidence type="ECO:0000305" key="3"/>
<feature type="signal peptide" evidence="2">
    <location>
        <begin position="1"/>
        <end position="28"/>
    </location>
</feature>
<feature type="chain" id="PRO_0000014107" description="Copper transporter MctB">
    <location>
        <begin position="29"/>
        <end position="317"/>
    </location>
</feature>
<sequence>MISLRQHAFSLAAVFLALAVGVVLGSGFLSDTLLSSLRDEKRDLYTQISGLNDQKNMLNEKVSAANNFDNQLLGRIVHDVLGGTSVVVFRTPDAKDDDVAAVSKIVVQAGGTVTGTVSLTQEFVDANSTEKLRSVVNSSILPAGAQLSTKLVDQGSQAGDLLGITLLVNANPAVPNVGDAQRSTVLVALRDTGFITYQTYNRNDHLGAANAALVITGGLLPQDAGNQGVSVARFSAALAPHGSGTLLAGRDGSATGVAAVAVARADAGMAATISTVDNVDAEPGRITAILGLHDLLSGGHTGQYGVGHGATSITVPQ</sequence>
<name>MCTB_MYCLE</name>